<protein>
    <recommendedName>
        <fullName evidence="1">Replication protein E1</fullName>
        <ecNumber evidence="1">5.6.2.4</ecNumber>
    </recommendedName>
    <alternativeName>
        <fullName evidence="1">ATP-dependent helicase E1</fullName>
    </alternativeName>
    <alternativeName>
        <fullName evidence="1">DNA 3'-5' helicase E1</fullName>
    </alternativeName>
</protein>
<evidence type="ECO:0000255" key="1">
    <source>
        <dbReference type="HAMAP-Rule" id="MF_04000"/>
    </source>
</evidence>
<evidence type="ECO:0000256" key="2">
    <source>
        <dbReference type="SAM" id="MobiDB-lite"/>
    </source>
</evidence>
<comment type="function">
    <text evidence="1">ATP-dependent DNA 3'-5' helicase required for initiation of viral DNA replication. It forms a complex with the viral E2 protein. The E1-E2 complex binds to the replication origin which contains binding sites for both proteins. During the initial step, a dimer of E1 interacts with a dimer of protein E2 leading to a complex that binds the viral origin of replication with high specificity. Then, a second dimer of E1 displaces the E2 dimer in an ATP-dependent manner to form the E1 tetramer. Following this, two E1 monomers are added to each half of the site, which results in the formation of two E1 trimers on the viral ori. Subsequently, two hexamers will be created. The double hexamer acts as a bi-directional helicase machinery and unwinds the viral DNA and then recruits the host DNA polymerase to start replication.</text>
</comment>
<comment type="catalytic activity">
    <reaction evidence="1">
        <text>Couples ATP hydrolysis with the unwinding of duplex DNA by translocating in the 3'-5' direction.</text>
        <dbReference type="EC" id="5.6.2.4"/>
    </reaction>
</comment>
<comment type="catalytic activity">
    <reaction evidence="1">
        <text>ATP + H2O = ADP + phosphate + H(+)</text>
        <dbReference type="Rhea" id="RHEA:13065"/>
        <dbReference type="ChEBI" id="CHEBI:15377"/>
        <dbReference type="ChEBI" id="CHEBI:15378"/>
        <dbReference type="ChEBI" id="CHEBI:30616"/>
        <dbReference type="ChEBI" id="CHEBI:43474"/>
        <dbReference type="ChEBI" id="CHEBI:456216"/>
        <dbReference type="EC" id="5.6.2.4"/>
    </reaction>
</comment>
<comment type="subunit">
    <text evidence="1">Can form hexamers. Interacts with E2 protein; this interaction increases E1 DNA binding specificity. Interacts with host DNA polymerase subunit POLA2. Interacts with host single stranded DNA-binding protein RPA1. Interacts with host TOP1; this interaction stimulates the enzymatic activity of TOP1.</text>
</comment>
<comment type="subcellular location">
    <subcellularLocation>
        <location evidence="1">Host nucleus</location>
    </subcellularLocation>
</comment>
<comment type="PTM">
    <text evidence="1">Phosphorylated.</text>
</comment>
<comment type="PTM">
    <text evidence="1">Sumoylated.</text>
</comment>
<comment type="similarity">
    <text evidence="1">Belongs to the papillomaviridae E1 protein family.</text>
</comment>
<proteinExistence type="inferred from homology"/>
<feature type="chain" id="PRO_0000133123" description="Replication protein E1">
    <location>
        <begin position="1"/>
        <end position="604"/>
    </location>
</feature>
<feature type="domain" description="SF3 helicase" evidence="1">
    <location>
        <begin position="406"/>
        <end position="556"/>
    </location>
</feature>
<feature type="region of interest" description="DNA-binding region" evidence="1">
    <location>
        <begin position="144"/>
        <end position="307"/>
    </location>
</feature>
<feature type="region of interest" description="Disordered" evidence="2">
    <location>
        <begin position="579"/>
        <end position="604"/>
    </location>
</feature>
<feature type="short sequence motif" description="Nuclear localization signal" evidence="1">
    <location>
        <begin position="76"/>
        <end position="78"/>
    </location>
</feature>
<feature type="compositionally biased region" description="Polar residues" evidence="2">
    <location>
        <begin position="587"/>
        <end position="604"/>
    </location>
</feature>
<feature type="binding site" evidence="1">
    <location>
        <begin position="432"/>
        <end position="439"/>
    </location>
    <ligand>
        <name>ATP</name>
        <dbReference type="ChEBI" id="CHEBI:30616"/>
    </ligand>
</feature>
<feature type="modified residue" description="Phosphoserine; by host" evidence="1">
    <location>
        <position position="81"/>
    </location>
</feature>
<feature type="modified residue" description="Phosphoserine; by host" evidence="1">
    <location>
        <position position="89"/>
    </location>
</feature>
<feature type="cross-link" description="Glycyl lysine isopeptide (Lys-Gly) (interchain with G-Cter in SUMO)" evidence="1">
    <location>
        <position position="513"/>
    </location>
</feature>
<reference key="1">
    <citation type="journal article" date="1994" name="Curr. Top. Microbiol. Immunol.">
        <title>Primer-directed sequencing of human papillomavirus types.</title>
        <authorList>
            <person name="Delius H."/>
            <person name="Hofmann B."/>
        </authorList>
    </citation>
    <scope>NUCLEOTIDE SEQUENCE [GENOMIC DNA]</scope>
</reference>
<reference key="2">
    <citation type="journal article" date="1992" name="J. Virol.">
        <title>Phylogenetic analysis of 48 papillomavirus types and 28 subtypes and variants: a showcase for the molecular evolution of DNA viruses.</title>
        <authorList>
            <person name="Chan S.-Y."/>
            <person name="Bernard H.U."/>
            <person name="Ong C.K."/>
            <person name="Chan S.P."/>
            <person name="Birgit H."/>
            <person name="Delius H."/>
        </authorList>
    </citation>
    <scope>NUCLEOTIDE SEQUENCE [GENOMIC DNA] OF 331-382</scope>
</reference>
<sequence>MADPKGSTSKEGFNDWCILEAECSDIDNDLEQLFDQDTDSDISDLLDENDVEQGNSRELFHLQECQESEEQLQKLKRKYLSPKAVAQLSPRFESISLSPQQKSKRRLFAEQDSGLELTLTNEAEDVSPEVEVPALNSQPVAEGQSGDIDISYTALLRASNNKAILMAKFKEAFGVGFNDLTRQFKSYKTCCNAWVISVYAVHDDLIESSKQLLQQHCDYVWIRGIGAMSLFLVCFKAGKNRGTVHKLMTTMLNVHEKQILSEPPKLRNVAAALFWYKGSMGSGVFTYGSYPDWIAHQTILGHQSAEASTFDLSDMVQWAFDNNYLDEADIAYQYAKLAPDNSNAVAWLAHNNQAKFVRECASMVRFYKKGQMKEMSMSEWIYTKIHEVEGEGQWSTIVQFLRYQQVNFIMFLAALKDLLHSVPKRNCILFYGPPNTGKSAFTMSLIKVLKGRVLSFCNSKSQFWLQPLSECKIALLDDVTDPCWVYMDTYLRNGLDGHYVSLDCKHKAPMQTKFPALLLTSNINVHNEVNYRYLHSRIKGFEFPNPFPMKADNTPQFDLTDQSWKSFFTRLWHQLDLSDQEDEGENGESQRAFQCSTRSANEHL</sequence>
<name>VE1_HPV25</name>
<dbReference type="EC" id="5.6.2.4" evidence="1"/>
<dbReference type="EMBL" id="X74471">
    <property type="protein sequence ID" value="CAA52526.1"/>
    <property type="molecule type" value="Genomic_DNA"/>
</dbReference>
<dbReference type="EMBL" id="M96321">
    <property type="protein sequence ID" value="AAA47010.1"/>
    <property type="molecule type" value="Genomic_DNA"/>
</dbReference>
<dbReference type="PIR" id="S36493">
    <property type="entry name" value="S36493"/>
</dbReference>
<dbReference type="SMR" id="Q02049"/>
<dbReference type="Proteomes" id="UP000009162">
    <property type="component" value="Genome"/>
</dbReference>
<dbReference type="GO" id="GO:0042025">
    <property type="term" value="C:host cell nucleus"/>
    <property type="evidence" value="ECO:0007669"/>
    <property type="project" value="UniProtKB-SubCell"/>
</dbReference>
<dbReference type="GO" id="GO:0005524">
    <property type="term" value="F:ATP binding"/>
    <property type="evidence" value="ECO:0007669"/>
    <property type="project" value="UniProtKB-UniRule"/>
</dbReference>
<dbReference type="GO" id="GO:0016887">
    <property type="term" value="F:ATP hydrolysis activity"/>
    <property type="evidence" value="ECO:0007669"/>
    <property type="project" value="RHEA"/>
</dbReference>
<dbReference type="GO" id="GO:0003677">
    <property type="term" value="F:DNA binding"/>
    <property type="evidence" value="ECO:0007669"/>
    <property type="project" value="UniProtKB-UniRule"/>
</dbReference>
<dbReference type="GO" id="GO:0003678">
    <property type="term" value="F:DNA helicase activity"/>
    <property type="evidence" value="ECO:0007669"/>
    <property type="project" value="UniProtKB-UniRule"/>
</dbReference>
<dbReference type="GO" id="GO:0006260">
    <property type="term" value="P:DNA replication"/>
    <property type="evidence" value="ECO:0007669"/>
    <property type="project" value="UniProtKB-UniRule"/>
</dbReference>
<dbReference type="Gene3D" id="3.40.1310.10">
    <property type="match status" value="1"/>
</dbReference>
<dbReference type="Gene3D" id="3.40.50.300">
    <property type="entry name" value="P-loop containing nucleotide triphosphate hydrolases"/>
    <property type="match status" value="1"/>
</dbReference>
<dbReference type="Gene3D" id="1.10.10.510">
    <property type="entry name" value="Zinc finger, large T-antigen D1 domain"/>
    <property type="match status" value="1"/>
</dbReference>
<dbReference type="HAMAP" id="MF_04000">
    <property type="entry name" value="PPV_E1"/>
    <property type="match status" value="1"/>
</dbReference>
<dbReference type="InterPro" id="IPR014015">
    <property type="entry name" value="Helicase_SF3_DNA-vir"/>
</dbReference>
<dbReference type="InterPro" id="IPR027417">
    <property type="entry name" value="P-loop_NTPase"/>
</dbReference>
<dbReference type="InterPro" id="IPR001177">
    <property type="entry name" value="PPV_DNA_helicase_E1_C"/>
</dbReference>
<dbReference type="InterPro" id="IPR014000">
    <property type="entry name" value="PPV_DNA_helicase_E1_N"/>
</dbReference>
<dbReference type="InterPro" id="IPR046832">
    <property type="entry name" value="PPV_E1_DBD"/>
</dbReference>
<dbReference type="InterPro" id="IPR046935">
    <property type="entry name" value="PPV_E1_DBD_sf"/>
</dbReference>
<dbReference type="InterPro" id="IPR016393">
    <property type="entry name" value="Rep_E1_papillomaV"/>
</dbReference>
<dbReference type="InterPro" id="IPR037102">
    <property type="entry name" value="Znf_lg_T-Ag_D1_dom_sf"/>
</dbReference>
<dbReference type="Pfam" id="PF00519">
    <property type="entry name" value="PPV_E1_C"/>
    <property type="match status" value="1"/>
</dbReference>
<dbReference type="Pfam" id="PF20450">
    <property type="entry name" value="PPV_E1_DBD"/>
    <property type="match status" value="1"/>
</dbReference>
<dbReference type="Pfam" id="PF00524">
    <property type="entry name" value="PPV_E1_N"/>
    <property type="match status" value="1"/>
</dbReference>
<dbReference type="PIRSF" id="PIRSF003383">
    <property type="entry name" value="Rep_E1_papillomaV"/>
    <property type="match status" value="1"/>
</dbReference>
<dbReference type="SUPFAM" id="SSF55464">
    <property type="entry name" value="Origin of replication-binding domain, RBD-like"/>
    <property type="match status" value="1"/>
</dbReference>
<dbReference type="SUPFAM" id="SSF52540">
    <property type="entry name" value="P-loop containing nucleoside triphosphate hydrolases"/>
    <property type="match status" value="1"/>
</dbReference>
<dbReference type="PROSITE" id="PS51206">
    <property type="entry name" value="SF3_HELICASE_1"/>
    <property type="match status" value="1"/>
</dbReference>
<organism>
    <name type="scientific">Human papillomavirus 25</name>
    <dbReference type="NCBI Taxonomy" id="10609"/>
    <lineage>
        <taxon>Viruses</taxon>
        <taxon>Monodnaviria</taxon>
        <taxon>Shotokuvirae</taxon>
        <taxon>Cossaviricota</taxon>
        <taxon>Papovaviricetes</taxon>
        <taxon>Zurhausenvirales</taxon>
        <taxon>Papillomaviridae</taxon>
        <taxon>Firstpapillomavirinae</taxon>
        <taxon>Betapapillomavirus</taxon>
        <taxon>Betapapillomavirus 1</taxon>
    </lineage>
</organism>
<accession>Q02049</accession>
<keyword id="KW-0067">ATP-binding</keyword>
<keyword id="KW-0235">DNA replication</keyword>
<keyword id="KW-0238">DNA-binding</keyword>
<keyword id="KW-0244">Early protein</keyword>
<keyword id="KW-0347">Helicase</keyword>
<keyword id="KW-1048">Host nucleus</keyword>
<keyword id="KW-0378">Hydrolase</keyword>
<keyword id="KW-0413">Isomerase</keyword>
<keyword id="KW-1017">Isopeptide bond</keyword>
<keyword id="KW-0547">Nucleotide-binding</keyword>
<keyword id="KW-0597">Phosphoprotein</keyword>
<keyword id="KW-0832">Ubl conjugation</keyword>
<gene>
    <name evidence="1" type="primary">E1</name>
</gene>
<organismHost>
    <name type="scientific">Homo sapiens</name>
    <name type="common">Human</name>
    <dbReference type="NCBI Taxonomy" id="9606"/>
</organismHost>